<name>MOKA_MONPI</name>
<organism>
    <name type="scientific">Monascus pilosus</name>
    <name type="common">Red mold</name>
    <dbReference type="NCBI Taxonomy" id="89488"/>
    <lineage>
        <taxon>Eukaryota</taxon>
        <taxon>Fungi</taxon>
        <taxon>Dikarya</taxon>
        <taxon>Ascomycota</taxon>
        <taxon>Pezizomycotina</taxon>
        <taxon>Eurotiomycetes</taxon>
        <taxon>Eurotiomycetidae</taxon>
        <taxon>Eurotiales</taxon>
        <taxon>Aspergillaceae</taxon>
        <taxon>Monascus</taxon>
    </lineage>
</organism>
<reference key="1">
    <citation type="journal article" date="2008" name="J. Agric. Food Chem.">
        <title>Cloning and characterization of monacolin K biosynthetic gene cluster from Monascus pilosus.</title>
        <authorList>
            <person name="Chen Y.P."/>
            <person name="Tseng C.P."/>
            <person name="Liaw L.L."/>
            <person name="Wang C.L."/>
            <person name="Chen I.C."/>
            <person name="Wu W.J."/>
            <person name="Wu M.D."/>
            <person name="Yuan G.F."/>
        </authorList>
    </citation>
    <scope>NUCLEOTIDE SEQUENCE [GENOMIC DNA]</scope>
    <scope>FUNCTION</scope>
    <scope>DISRUPTION PHENOTYPE</scope>
</reference>
<reference key="2">
    <citation type="journal article" date="2009" name="Biotechnol. Lett.">
        <title>Identification of mokB involved in monacolin K biosynthesis in Monascus pilosus.</title>
        <authorList>
            <person name="Sakai K."/>
            <person name="Kinoshita H."/>
            <person name="Nihira T."/>
        </authorList>
    </citation>
    <scope>FUNCTION</scope>
</reference>
<reference key="3">
    <citation type="journal article" date="2010" name="J. Agric. Food Chem.">
        <title>Identification of the mokH gene encoding transcription factor for the upregulation of monacolin K biosynthesis in Monascus pilosus.</title>
        <authorList>
            <person name="Chen Y.-P."/>
            <person name="Yuan G.-F."/>
            <person name="Hsieh S.-Y."/>
            <person name="Lin Y.-S."/>
            <person name="Wang W.-Y."/>
            <person name="Liaw L.-L."/>
            <person name="Tseng C.-P."/>
        </authorList>
    </citation>
    <scope>INDUCTION</scope>
</reference>
<reference key="4">
    <citation type="journal article" date="2011" name="Biosci. Biotechnol. Biochem.">
        <title>Simultaneous enrichment of deglycosylated ginsenosides and monacolin K in red ginseng by fermentation with Monascus pilosus.</title>
        <authorList>
            <person name="Hong S.Y."/>
            <person name="Oh J.H."/>
            <person name="Lee I."/>
        </authorList>
    </citation>
    <scope>BIOTECHNOLOGY</scope>
</reference>
<accession>Q3S2T9</accession>
<proteinExistence type="evidence at protein level"/>
<dbReference type="EC" id="2.3.1.161" evidence="2"/>
<dbReference type="EMBL" id="DQ176595">
    <property type="protein sequence ID" value="ABA02239.1"/>
    <property type="molecule type" value="Genomic_DNA"/>
</dbReference>
<dbReference type="PDB" id="6AD3">
    <property type="method" value="X-ray"/>
    <property type="resolution" value="1.79 A"/>
    <property type="chains" value="A=2578-3075"/>
</dbReference>
<dbReference type="PDBsum" id="6AD3"/>
<dbReference type="SMR" id="Q3S2T9"/>
<dbReference type="UniPathway" id="UPA00875"/>
<dbReference type="GO" id="GO:0004315">
    <property type="term" value="F:3-oxoacyl-[acyl-carrier-protein] synthase activity"/>
    <property type="evidence" value="ECO:0007669"/>
    <property type="project" value="InterPro"/>
</dbReference>
<dbReference type="GO" id="GO:0004312">
    <property type="term" value="F:fatty acid synthase activity"/>
    <property type="evidence" value="ECO:0007669"/>
    <property type="project" value="TreeGrafter"/>
</dbReference>
<dbReference type="GO" id="GO:0050637">
    <property type="term" value="F:lovastatin nonaketide synthase activity"/>
    <property type="evidence" value="ECO:0007669"/>
    <property type="project" value="UniProtKB-EC"/>
</dbReference>
<dbReference type="GO" id="GO:0008168">
    <property type="term" value="F:methyltransferase activity"/>
    <property type="evidence" value="ECO:0007669"/>
    <property type="project" value="UniProtKB-KW"/>
</dbReference>
<dbReference type="GO" id="GO:0016491">
    <property type="term" value="F:oxidoreductase activity"/>
    <property type="evidence" value="ECO:0007669"/>
    <property type="project" value="UniProtKB-KW"/>
</dbReference>
<dbReference type="GO" id="GO:0031177">
    <property type="term" value="F:phosphopantetheine binding"/>
    <property type="evidence" value="ECO:0007669"/>
    <property type="project" value="InterPro"/>
</dbReference>
<dbReference type="GO" id="GO:0006633">
    <property type="term" value="P:fatty acid biosynthetic process"/>
    <property type="evidence" value="ECO:0007669"/>
    <property type="project" value="InterPro"/>
</dbReference>
<dbReference type="GO" id="GO:0032259">
    <property type="term" value="P:methylation"/>
    <property type="evidence" value="ECO:0007669"/>
    <property type="project" value="UniProtKB-KW"/>
</dbReference>
<dbReference type="GO" id="GO:0009403">
    <property type="term" value="P:toxin biosynthetic process"/>
    <property type="evidence" value="ECO:0007669"/>
    <property type="project" value="UniProtKB-ARBA"/>
</dbReference>
<dbReference type="CDD" id="cd02440">
    <property type="entry name" value="AdoMet_MTases"/>
    <property type="match status" value="1"/>
</dbReference>
<dbReference type="CDD" id="cd19532">
    <property type="entry name" value="C_PKS-NRPS"/>
    <property type="match status" value="1"/>
</dbReference>
<dbReference type="CDD" id="cd00833">
    <property type="entry name" value="PKS"/>
    <property type="match status" value="1"/>
</dbReference>
<dbReference type="FunFam" id="3.40.47.10:FF:000019">
    <property type="entry name" value="Polyketide synthase type I"/>
    <property type="match status" value="1"/>
</dbReference>
<dbReference type="Gene3D" id="3.40.47.10">
    <property type="match status" value="1"/>
</dbReference>
<dbReference type="Gene3D" id="3.30.559.10">
    <property type="entry name" value="Chloramphenicol acetyltransferase-like domain"/>
    <property type="match status" value="1"/>
</dbReference>
<dbReference type="Gene3D" id="3.40.366.10">
    <property type="entry name" value="Malonyl-Coenzyme A Acyl Carrier Protein, domain 2"/>
    <property type="match status" value="1"/>
</dbReference>
<dbReference type="Gene3D" id="3.40.50.720">
    <property type="entry name" value="NAD(P)-binding Rossmann-like Domain"/>
    <property type="match status" value="2"/>
</dbReference>
<dbReference type="Gene3D" id="3.30.559.30">
    <property type="entry name" value="Nonribosomal peptide synthetase, condensation domain"/>
    <property type="match status" value="1"/>
</dbReference>
<dbReference type="Gene3D" id="3.10.129.110">
    <property type="entry name" value="Polyketide synthase dehydratase"/>
    <property type="match status" value="1"/>
</dbReference>
<dbReference type="Gene3D" id="3.40.50.150">
    <property type="entry name" value="Vaccinia Virus protein VP39"/>
    <property type="match status" value="1"/>
</dbReference>
<dbReference type="InterPro" id="IPR001227">
    <property type="entry name" value="Ac_transferase_dom_sf"/>
</dbReference>
<dbReference type="InterPro" id="IPR036736">
    <property type="entry name" value="ACP-like_sf"/>
</dbReference>
<dbReference type="InterPro" id="IPR014043">
    <property type="entry name" value="Acyl_transferase_dom"/>
</dbReference>
<dbReference type="InterPro" id="IPR016035">
    <property type="entry name" value="Acyl_Trfase/lysoPLipase"/>
</dbReference>
<dbReference type="InterPro" id="IPR023213">
    <property type="entry name" value="CAT-like_dom_sf"/>
</dbReference>
<dbReference type="InterPro" id="IPR001242">
    <property type="entry name" value="Condensatn"/>
</dbReference>
<dbReference type="InterPro" id="IPR018201">
    <property type="entry name" value="Ketoacyl_synth_AS"/>
</dbReference>
<dbReference type="InterPro" id="IPR014031">
    <property type="entry name" value="Ketoacyl_synth_C"/>
</dbReference>
<dbReference type="InterPro" id="IPR014030">
    <property type="entry name" value="Ketoacyl_synth_N"/>
</dbReference>
<dbReference type="InterPro" id="IPR016036">
    <property type="entry name" value="Malonyl_transacylase_ACP-bd"/>
</dbReference>
<dbReference type="InterPro" id="IPR013217">
    <property type="entry name" value="Methyltransf_12"/>
</dbReference>
<dbReference type="InterPro" id="IPR036291">
    <property type="entry name" value="NAD(P)-bd_dom_sf"/>
</dbReference>
<dbReference type="InterPro" id="IPR032821">
    <property type="entry name" value="PKS_assoc"/>
</dbReference>
<dbReference type="InterPro" id="IPR020841">
    <property type="entry name" value="PKS_Beta-ketoAc_synthase_dom"/>
</dbReference>
<dbReference type="InterPro" id="IPR042104">
    <property type="entry name" value="PKS_dehydratase_sf"/>
</dbReference>
<dbReference type="InterPro" id="IPR020807">
    <property type="entry name" value="PKS_DH"/>
</dbReference>
<dbReference type="InterPro" id="IPR049551">
    <property type="entry name" value="PKS_DH_C"/>
</dbReference>
<dbReference type="InterPro" id="IPR049552">
    <property type="entry name" value="PKS_DH_N"/>
</dbReference>
<dbReference type="InterPro" id="IPR013968">
    <property type="entry name" value="PKS_KR"/>
</dbReference>
<dbReference type="InterPro" id="IPR049900">
    <property type="entry name" value="PKS_mFAS_DH"/>
</dbReference>
<dbReference type="InterPro" id="IPR050091">
    <property type="entry name" value="PKS_NRPS_Biosynth_Enz"/>
</dbReference>
<dbReference type="InterPro" id="IPR020806">
    <property type="entry name" value="PKS_PP-bd"/>
</dbReference>
<dbReference type="InterPro" id="IPR009081">
    <property type="entry name" value="PP-bd_ACP"/>
</dbReference>
<dbReference type="InterPro" id="IPR029063">
    <property type="entry name" value="SAM-dependent_MTases_sf"/>
</dbReference>
<dbReference type="InterPro" id="IPR016039">
    <property type="entry name" value="Thiolase-like"/>
</dbReference>
<dbReference type="PANTHER" id="PTHR43775">
    <property type="entry name" value="FATTY ACID SYNTHASE"/>
    <property type="match status" value="1"/>
</dbReference>
<dbReference type="PANTHER" id="PTHR43775:SF20">
    <property type="entry name" value="HYBRID PKS-NRPS SYNTHETASE APDA"/>
    <property type="match status" value="1"/>
</dbReference>
<dbReference type="Pfam" id="PF00698">
    <property type="entry name" value="Acyl_transf_1"/>
    <property type="match status" value="1"/>
</dbReference>
<dbReference type="Pfam" id="PF00668">
    <property type="entry name" value="Condensation"/>
    <property type="match status" value="1"/>
</dbReference>
<dbReference type="Pfam" id="PF16197">
    <property type="entry name" value="KAsynt_C_assoc"/>
    <property type="match status" value="1"/>
</dbReference>
<dbReference type="Pfam" id="PF00109">
    <property type="entry name" value="ketoacyl-synt"/>
    <property type="match status" value="1"/>
</dbReference>
<dbReference type="Pfam" id="PF02801">
    <property type="entry name" value="Ketoacyl-synt_C"/>
    <property type="match status" value="1"/>
</dbReference>
<dbReference type="Pfam" id="PF08659">
    <property type="entry name" value="KR"/>
    <property type="match status" value="1"/>
</dbReference>
<dbReference type="Pfam" id="PF08242">
    <property type="entry name" value="Methyltransf_12"/>
    <property type="match status" value="1"/>
</dbReference>
<dbReference type="Pfam" id="PF21089">
    <property type="entry name" value="PKS_DH_N"/>
    <property type="match status" value="1"/>
</dbReference>
<dbReference type="Pfam" id="PF00550">
    <property type="entry name" value="PP-binding"/>
    <property type="match status" value="1"/>
</dbReference>
<dbReference type="Pfam" id="PF14765">
    <property type="entry name" value="PS-DH"/>
    <property type="match status" value="1"/>
</dbReference>
<dbReference type="SMART" id="SM00827">
    <property type="entry name" value="PKS_AT"/>
    <property type="match status" value="1"/>
</dbReference>
<dbReference type="SMART" id="SM00826">
    <property type="entry name" value="PKS_DH"/>
    <property type="match status" value="1"/>
</dbReference>
<dbReference type="SMART" id="SM00822">
    <property type="entry name" value="PKS_KR"/>
    <property type="match status" value="1"/>
</dbReference>
<dbReference type="SMART" id="SM00825">
    <property type="entry name" value="PKS_KS"/>
    <property type="match status" value="1"/>
</dbReference>
<dbReference type="SMART" id="SM00823">
    <property type="entry name" value="PKS_PP"/>
    <property type="match status" value="1"/>
</dbReference>
<dbReference type="SUPFAM" id="SSF47336">
    <property type="entry name" value="ACP-like"/>
    <property type="match status" value="1"/>
</dbReference>
<dbReference type="SUPFAM" id="SSF52777">
    <property type="entry name" value="CoA-dependent acyltransferases"/>
    <property type="match status" value="2"/>
</dbReference>
<dbReference type="SUPFAM" id="SSF52151">
    <property type="entry name" value="FabD/lysophospholipase-like"/>
    <property type="match status" value="1"/>
</dbReference>
<dbReference type="SUPFAM" id="SSF51735">
    <property type="entry name" value="NAD(P)-binding Rossmann-fold domains"/>
    <property type="match status" value="2"/>
</dbReference>
<dbReference type="SUPFAM" id="SSF55048">
    <property type="entry name" value="Probable ACP-binding domain of malonyl-CoA ACP transacylase"/>
    <property type="match status" value="1"/>
</dbReference>
<dbReference type="SUPFAM" id="SSF53335">
    <property type="entry name" value="S-adenosyl-L-methionine-dependent methyltransferases"/>
    <property type="match status" value="1"/>
</dbReference>
<dbReference type="SUPFAM" id="SSF53901">
    <property type="entry name" value="Thiolase-like"/>
    <property type="match status" value="1"/>
</dbReference>
<dbReference type="PROSITE" id="PS50075">
    <property type="entry name" value="CARRIER"/>
    <property type="match status" value="1"/>
</dbReference>
<dbReference type="PROSITE" id="PS00606">
    <property type="entry name" value="KS3_1"/>
    <property type="match status" value="1"/>
</dbReference>
<dbReference type="PROSITE" id="PS52004">
    <property type="entry name" value="KS3_2"/>
    <property type="match status" value="1"/>
</dbReference>
<dbReference type="PROSITE" id="PS52019">
    <property type="entry name" value="PKS_MFAS_DH"/>
    <property type="match status" value="1"/>
</dbReference>
<protein>
    <recommendedName>
        <fullName evidence="11">Lovastatin nonaketide synthase mokA</fullName>
        <ecNumber evidence="2">2.3.1.161</ecNumber>
    </recommendedName>
    <alternativeName>
        <fullName evidence="11">Monacolin K biosynthesis protein A</fullName>
    </alternativeName>
</protein>
<keyword id="KW-0002">3D-structure</keyword>
<keyword id="KW-0012">Acyltransferase</keyword>
<keyword id="KW-0489">Methyltransferase</keyword>
<keyword id="KW-0511">Multifunctional enzyme</keyword>
<keyword id="KW-0521">NADP</keyword>
<keyword id="KW-0560">Oxidoreductase</keyword>
<keyword id="KW-0596">Phosphopantetheine</keyword>
<keyword id="KW-0597">Phosphoprotein</keyword>
<keyword id="KW-0949">S-adenosyl-L-methionine</keyword>
<keyword id="KW-0808">Transferase</keyword>
<sequence>MYVGRIGATTYISRPADSRATPKVIKTQGSITTSNLTSLTTMAQSTYPNEPIVVVGSGCRFPGGANTPSKLWELLREPRDVRSKIPKERFDVDAFYHPDGKHHGRTNAPYAYMLQEDLRAFDGPFFNIQAGEAESMDPQQRLLLETVYEAVSDAGMRIQDLQGSSTAVYVGMMTHDYETVSTRDLESIPTYSATGVAVSVASNRISYFFDWHGPSMTIDTACSSSLVAVHLAVQQLRSGQSSMAIAAGANMILGPMTFVLESKLNMLSPSGRSRMWDAGADGYARGEAVCSVVLKTLSQALRDGDSIECVIRETGVNQDGRTTGITMPNHSAQEALIRATYSKAGLDITNPEDRCQFFEAHGTGTPAGDPQEAEAIATAFFGHKKEASDAENAETPLFVGSVKTVVGHTEGTAGLAGLMKASFAVQHGVIPPNLLFENISPRVAPFYSNLKIATETTPWPTIKPGQPRRVSVNSFGFGGTNAHAIIEEYIKSDQKVPASRQPVEYSDSPSTLNLPLVLSAKSQRSMKTTLESMVQFLQSNPEVNLRDLSWTLLRKRSILPFRRAIVGHSHEAIRAALEAAIEDGIVVSDFSADVKGKPSVLGVFTGQGAQWPGMLKELIVGSSYVRSIAEELDHSLQTLPEKYRPSWTILEQLMLEDEASNVRHASFSQPLCCAVQIVLVRLLKAAGIQFAAVVGHSSGEIACAFATGLISASLAIRIAHLRGVVSAEHAASASGGRGSMLAAGMSYEEAKELCELDAFESRICVAASNSPDSVTFSGDADAIEHLQGVLEDEATFARLLRVDTAYHSHHMLPCAAPYMQALEECGCAVADGDGQVEEGSWYSSVKDSNEPMGLADVTAEYWKDNLVSPVLFSQAVQRAAIMHRPLDVGIEVGCHPALKGPCLATIKDALSDVDLAYTGCLERGKNDMNAFSQALAYLWEQFGIPSLDADRFISTIAPERSCVSLSKQLPTYSWDHSRSYWTESRATRQHLRGPKPHLLLGKLSEYSTPLTFQWLNFVRPRDIEWLDGHALQGQVVFPAAGYIVMAMEAAMEIANSHQVQVQLLEILDMSIDKAVVFDDEDSLVELNLTAEVTSGIGKGDRMILSFIIDSCLSREGDLSTSAKGQLVVTLDEGHLQVTPDNEKQLLPPPEEEHPHMNRVNINSFYHELDLMGYDYSKDFRRLHSMRRADARASGILEFIPLNDEVHGRPLLLHPAPLDIAFQTVIGAYSSPGDRRLRCLYVPTHIDRIALVPSLCLATAASGCDKIAFNTINTYDKGDFLSGDIVAFDAEQTSLFHVENIVFKPFSPPTASTDHPIFAKWSWGPLTPETLLDNPNHWATAQDKEAIPIIERIVYFYIKLFLQQLTREDREQAAFHLQRQIVWCEQVVADAHEGRHQWYDAAWENDTEAQIEQLCARSSYHPHVRLVQRVGQNLLATIRSNGNPFDLMDHDGLLTEFYTNTLSFGPALHYAQDLVGQIAHRYQSMDILEIGAGTGGATKYVLATPQLGFNSYTYTDISTGFFEKAREQFAAFEDRMEFEPLDIRRSPAEQGFTEHVYDLIIASNVLHATPDLEKTMAHARSLLKPGGQMVILEITHRNHTRLGFIFGLFADWWAGIDDGRTMEPFVSFDRWDEILKHVGFSGIDSRTKDRDADLFPTSVFSTHAVNSTIDYLHKPLDAPVKDSYPPLVVVGGQTPKTQRILDEIKAVMPNRQIQLHQRLVDLLDAEDMQAKFTFVVLTELDEELFAGLTEDSFEAVKLLLMYAGNMLWLTENAWVKRPHQASTIGMLRSIRREHPDIGVHIMDVDSAENLDAHFLVEQVLRLEEDIDELAATTTWTQEPEVFWCNGRAWIPRLKHDKSRNNRMNSSRRQIFETLNPSKIPVALKKAAASSSYYLESAETWPVPGAVTAGDRKTVHVRLSHPHALRVGHLGFFYLVQGHVLKGDQALPVVALAERNASIVHVRSDYVHVLEDTAVSANNGSFILAAAAAVLAETVIHSAKSLGADASVLVLNAPGFCAQTLLRAARDSGLRVHLATTSSSTDPSPGADRCVRLHPRDTDRRLKQLLPRGTQAFFDLSTDPSSEGLTQRLPNVLIPSCVRHSTEYLLRDTASAGGKATLPAAYWERVASLANHSLSTHFKENDNASNGCQVLSCTDIVARNNKSRLNASTVISWPDDAALPARIRPIDTETLFAAEKTYLLVGLTGDLGRSLGRWMVLHGARRIVLTSRNPQVSPNWVAHVEELGGQVTVLSMDVTSEDSVDSGLAKLQDLKLPPIGGIAFGPLVLQDVMLKNMDLQMMEMVLKPKVEGARILHEKFSDPASSNPLDFFVMFSSIVAVMGNPGQANYSAANCYLQALAQRRCASGLAASTIDIGAVYGVGFVTRAELEEDFNAIRFMFDSVEEHELHSLFAEAVVSGRRAMHQQQQFKTVLDMADIELTTGIPPLDPTLKDRITFFDDARVGNFKIPERRGKAGDNAAGSKGSVKEQLLQATSLDQVRQIVIDGLSEKLRVTLQIPDGESVHPTIPLIDQGVDSLGAVTVGTWFSKQLYLDLPLLRVLGGASVADLADDAAARLPPSSIPLVAASEGGAETSDNDTSGPEGTDLSASTTITEPSSADEEDEKQEDDNDNSVLALHPLSLGQEYAWRLQKAADDSTIFNNTIGMFMTGSIDAKRLSKALRAVLRRHEIFRTGFAAVGNNADATSLAQIVFGRTKNKVQVIQVADRAGAEEGYRQLVQTQYDITAGDTLRLVDFFWGKDEHLFVVAYHRFVGDGSTTENIFVEASQLYGGVTLDKHVPQFADLATRQREALESGQMDADLAYWESMHHQPTGVVSPVLPRMLLGEDGLNSPNHARQPNSWKQHEAIARLDPMVAFRIRERSRKHKATPMQFYLAAYHVLLARLTGSSDFSIGLADTNRTNVDELAGMGFFANLLPLRFRNFVPHITFGEHLVATKDKVREAMQHARVPYGVLLERLGFEVPGATAETAEPAPLFQAVFDYKQGQAESGSIGSAKMTEVIATRERTPYDVVLEMSDDPTKDPLLTVKLQSSVYEVHHPRAFLESYISILSMFSMNPALKLA</sequence>
<feature type="chain" id="PRO_0000436279" description="Lovastatin nonaketide synthase mokA">
    <location>
        <begin position="1"/>
        <end position="3075"/>
    </location>
</feature>
<feature type="domain" description="Ketosynthase family 3 (KS3)" evidence="4">
    <location>
        <begin position="49"/>
        <end position="488"/>
    </location>
</feature>
<feature type="domain" description="PKS/mFAS DH" evidence="5">
    <location>
        <begin position="997"/>
        <end position="1311"/>
    </location>
</feature>
<feature type="domain" description="Carrier" evidence="3">
    <location>
        <begin position="2492"/>
        <end position="2571"/>
    </location>
</feature>
<feature type="region of interest" description="Acyl and malonyl transferase" evidence="2">
    <location>
        <begin position="603"/>
        <end position="945"/>
    </location>
</feature>
<feature type="region of interest" description="N-terminal hotdog fold" evidence="5">
    <location>
        <begin position="997"/>
        <end position="1133"/>
    </location>
</feature>
<feature type="region of interest" description="Dehydratase-like" evidence="2">
    <location>
        <begin position="1029"/>
        <end position="1041"/>
    </location>
</feature>
<feature type="region of interest" description="C-terminal hotdog fold" evidence="5">
    <location>
        <begin position="1156"/>
        <end position="1311"/>
    </location>
</feature>
<feature type="region of interest" description="Methyltransferase" evidence="2">
    <location>
        <begin position="1556"/>
        <end position="1594"/>
    </location>
</feature>
<feature type="region of interest" description="Beta-ketoacyl reductase" evidence="2">
    <location>
        <begin position="2176"/>
        <end position="2470"/>
    </location>
</feature>
<feature type="region of interest" description="Disordered" evidence="7">
    <location>
        <begin position="2582"/>
        <end position="2624"/>
    </location>
</feature>
<feature type="region of interest" description="Peptide synthetase elongation" evidence="2">
    <location>
        <begin position="2633"/>
        <end position="2989"/>
    </location>
</feature>
<feature type="compositionally biased region" description="Polar residues" evidence="7">
    <location>
        <begin position="2591"/>
        <end position="2611"/>
    </location>
</feature>
<feature type="compositionally biased region" description="Acidic residues" evidence="7">
    <location>
        <begin position="2612"/>
        <end position="2624"/>
    </location>
</feature>
<feature type="active site" description="For beta-ketoacyl synthase activity" evidence="4">
    <location>
        <position position="222"/>
    </location>
</feature>
<feature type="active site" description="For beta-ketoacyl synthase activity" evidence="4">
    <location>
        <position position="361"/>
    </location>
</feature>
<feature type="active site" description="For beta-ketoacyl synthase activity" evidence="4">
    <location>
        <position position="408"/>
    </location>
</feature>
<feature type="active site" description="For malonyltransferase activity" evidence="6">
    <location>
        <position position="697"/>
    </location>
</feature>
<feature type="active site" description="Proton acceptor; for dehydratase activity" evidence="5">
    <location>
        <position position="1029"/>
    </location>
</feature>
<feature type="active site" description="Proton donor; for dehydratase activity" evidence="5">
    <location>
        <position position="1218"/>
    </location>
</feature>
<feature type="modified residue" description="O-(pantetheine 4'-phosphoryl)serine" evidence="3">
    <location>
        <position position="2531"/>
    </location>
</feature>
<feature type="strand" evidence="13">
    <location>
        <begin position="2628"/>
        <end position="2633"/>
    </location>
</feature>
<feature type="helix" evidence="13">
    <location>
        <begin position="2636"/>
        <end position="2647"/>
    </location>
</feature>
<feature type="helix" evidence="13">
    <location>
        <begin position="2651"/>
        <end position="2654"/>
    </location>
</feature>
<feature type="strand" evidence="13">
    <location>
        <begin position="2656"/>
        <end position="2664"/>
    </location>
</feature>
<feature type="helix" evidence="13">
    <location>
        <begin position="2668"/>
        <end position="2681"/>
    </location>
</feature>
<feature type="helix" evidence="13">
    <location>
        <begin position="2683"/>
        <end position="2686"/>
    </location>
</feature>
<feature type="strand" evidence="13">
    <location>
        <begin position="2687"/>
        <end position="2696"/>
    </location>
</feature>
<feature type="strand" evidence="13">
    <location>
        <begin position="2701"/>
        <end position="2708"/>
    </location>
</feature>
<feature type="strand" evidence="13">
    <location>
        <begin position="2713"/>
        <end position="2717"/>
    </location>
</feature>
<feature type="helix" evidence="13">
    <location>
        <begin position="2721"/>
        <end position="2732"/>
    </location>
</feature>
<feature type="helix" evidence="13">
    <location>
        <begin position="2738"/>
        <end position="2740"/>
    </location>
</feature>
<feature type="strand" evidence="13">
    <location>
        <begin position="2744"/>
        <end position="2751"/>
    </location>
</feature>
<feature type="turn" evidence="13">
    <location>
        <begin position="2752"/>
        <end position="2754"/>
    </location>
</feature>
<feature type="strand" evidence="13">
    <location>
        <begin position="2755"/>
        <end position="2762"/>
    </location>
</feature>
<feature type="helix" evidence="13">
    <location>
        <begin position="2764"/>
        <end position="2766"/>
    </location>
</feature>
<feature type="helix" evidence="13">
    <location>
        <begin position="2769"/>
        <end position="2783"/>
    </location>
</feature>
<feature type="helix" evidence="13">
    <location>
        <begin position="2795"/>
        <end position="2807"/>
    </location>
</feature>
<feature type="turn" evidence="13">
    <location>
        <begin position="2808"/>
        <end position="2811"/>
    </location>
</feature>
<feature type="helix" evidence="13">
    <location>
        <begin position="2812"/>
        <end position="2822"/>
    </location>
</feature>
<feature type="strand" evidence="13">
    <location>
        <begin position="2857"/>
        <end position="2863"/>
    </location>
</feature>
<feature type="helix" evidence="13">
    <location>
        <begin position="2866"/>
        <end position="2878"/>
    </location>
</feature>
<feature type="helix" evidence="13">
    <location>
        <begin position="2883"/>
        <end position="2899"/>
    </location>
</feature>
<feature type="strand" evidence="13">
    <location>
        <begin position="2902"/>
        <end position="2910"/>
    </location>
</feature>
<feature type="helix" evidence="13">
    <location>
        <begin position="2916"/>
        <end position="2920"/>
    </location>
</feature>
<feature type="strand" evidence="13">
    <location>
        <begin position="2927"/>
        <end position="2933"/>
    </location>
</feature>
<feature type="helix" evidence="13">
    <location>
        <begin position="2942"/>
        <end position="2957"/>
    </location>
</feature>
<feature type="turn" evidence="13">
    <location>
        <begin position="2958"/>
        <end position="2961"/>
    </location>
</feature>
<feature type="helix" evidence="13">
    <location>
        <begin position="2964"/>
        <end position="2970"/>
    </location>
</feature>
<feature type="strand" evidence="13">
    <location>
        <begin position="2979"/>
        <end position="2981"/>
    </location>
</feature>
<feature type="strand" evidence="13">
    <location>
        <begin position="2990"/>
        <end position="2996"/>
    </location>
</feature>
<feature type="helix" evidence="13">
    <location>
        <begin position="3000"/>
        <end position="3003"/>
    </location>
</feature>
<feature type="strand" evidence="13">
    <location>
        <begin position="3008"/>
        <end position="3016"/>
    </location>
</feature>
<feature type="strand" evidence="13">
    <location>
        <begin position="3023"/>
        <end position="3029"/>
    </location>
</feature>
<feature type="strand" evidence="13">
    <location>
        <begin position="3037"/>
        <end position="3043"/>
    </location>
</feature>
<feature type="turn" evidence="13">
    <location>
        <begin position="3044"/>
        <end position="3046"/>
    </location>
</feature>
<feature type="helix" evidence="13">
    <location>
        <begin position="3051"/>
        <end position="3068"/>
    </location>
</feature>
<gene>
    <name evidence="11" type="primary">mokA</name>
</gene>
<evidence type="ECO:0000250" key="1">
    <source>
        <dbReference type="UniProtKB" id="Q0C8M2"/>
    </source>
</evidence>
<evidence type="ECO:0000250" key="2">
    <source>
        <dbReference type="UniProtKB" id="Q9Y8A5"/>
    </source>
</evidence>
<evidence type="ECO:0000255" key="3">
    <source>
        <dbReference type="PROSITE-ProRule" id="PRU00258"/>
    </source>
</evidence>
<evidence type="ECO:0000255" key="4">
    <source>
        <dbReference type="PROSITE-ProRule" id="PRU01348"/>
    </source>
</evidence>
<evidence type="ECO:0000255" key="5">
    <source>
        <dbReference type="PROSITE-ProRule" id="PRU01363"/>
    </source>
</evidence>
<evidence type="ECO:0000255" key="6">
    <source>
        <dbReference type="PROSITE-ProRule" id="PRU10022"/>
    </source>
</evidence>
<evidence type="ECO:0000256" key="7">
    <source>
        <dbReference type="SAM" id="MobiDB-lite"/>
    </source>
</evidence>
<evidence type="ECO:0000269" key="8">
    <source>
    </source>
</evidence>
<evidence type="ECO:0000269" key="9">
    <source>
    </source>
</evidence>
<evidence type="ECO:0000269" key="10">
    <source>
    </source>
</evidence>
<evidence type="ECO:0000303" key="11">
    <source>
    </source>
</evidence>
<evidence type="ECO:0000303" key="12">
    <source>
    </source>
</evidence>
<evidence type="ECO:0007829" key="13">
    <source>
        <dbReference type="PDB" id="6AD3"/>
    </source>
</evidence>
<comment type="function">
    <text evidence="1 2 8 12">Nonaketide synthase; part of the gene cluster that mediates the biosynthesis of monakolin K, also known as lovastatin, and which acts as a potent competitive inhibitor of HMG-CoA reductase (PubMed:18578535). Monakolin K biosynthesis is performed in two stages (PubMed:19693441). The first stage is catalyzed by the nonaketide synthase mokA, which belongs to type I polyketide synthases and catalyzes the iterative nine-step formation of the polyketide (PubMed:18578535, PubMed:19693441). This PKS stage is completed by the action of dehydrogenase mokE, which catalyzes the NADPH-dependent reduction of the unsaturated tetra-, penta- and heptaketide intermediates that arise during the mokA-mediated biosynthesis of the nonaketide chain and leads to dihydromonacolin L (PubMed:19693441). Covalently bound dihydromonacolin L is released from mokA by the mokD esterase (By similarity). Conversion of dihydromonacolin L into monacolin L and then monacolin J is subsequently performed with the participation of molecular oxygen and P450 monoogygenase mokC (PubMed:19693441). Finally, mokF performs the conversion of monacoline J to monacoline K through the addition of the side-chain diketide moiety (2R)-2-methylbutanoate produced by the diketide synthase mokB (PubMed:19693441).</text>
</comment>
<comment type="catalytic activity">
    <reaction evidence="2">
        <text>holo-[lovastatin nonaketide synthase] + 9 malonyl-CoA + S-adenosyl-L-methionine + 11 NADPH + 19 H(+) = dihydromonacolin L-[lovastatin nonaketide synthase] + S-adenosyl-L-homocysteine + 9 CO2 + 11 NADP(+) + 9 CoA + 6 H2O</text>
        <dbReference type="Rhea" id="RHEA:18565"/>
        <dbReference type="Rhea" id="RHEA-COMP:10042"/>
        <dbReference type="Rhea" id="RHEA-COMP:10043"/>
        <dbReference type="ChEBI" id="CHEBI:15377"/>
        <dbReference type="ChEBI" id="CHEBI:15378"/>
        <dbReference type="ChEBI" id="CHEBI:16526"/>
        <dbReference type="ChEBI" id="CHEBI:57287"/>
        <dbReference type="ChEBI" id="CHEBI:57384"/>
        <dbReference type="ChEBI" id="CHEBI:57783"/>
        <dbReference type="ChEBI" id="CHEBI:57856"/>
        <dbReference type="ChEBI" id="CHEBI:58349"/>
        <dbReference type="ChEBI" id="CHEBI:59789"/>
        <dbReference type="ChEBI" id="CHEBI:64479"/>
        <dbReference type="ChEBI" id="CHEBI:79032"/>
        <dbReference type="EC" id="2.3.1.161"/>
    </reaction>
</comment>
<comment type="cofactor">
    <cofactor evidence="2">
        <name>pantetheine 4'-phosphate</name>
        <dbReference type="ChEBI" id="CHEBI:47942"/>
    </cofactor>
    <text evidence="2">Binds 1 phosphopantetheine covalently.</text>
</comment>
<comment type="pathway">
    <text evidence="8">Polyketide biosynthesis; lovastatin biosynthesis.</text>
</comment>
<comment type="induction">
    <text evidence="9">Expression is controlled by the monacolin K cluster transcription regulator mokH (PubMed:19968298).</text>
</comment>
<comment type="disruption phenotype">
    <text evidence="8">Impairs the production of monacoline K (PubMed:18578535).</text>
</comment>
<comment type="biotechnology">
    <text evidence="10">Monacoline K acts as an inhibitor of HMG-CoA reductase involved in cholesterogenesis (PubMed:21821946). Its hypocholesterolemic activity might be useful for lowering cholesterol levels in the blood and reduce artherosclerosis and coronary heart disease (PubMed:21821946).</text>
</comment>